<protein>
    <recommendedName>
        <fullName evidence="1">Ribonuclease Z</fullName>
        <shortName evidence="1">RNase Z</shortName>
        <ecNumber evidence="1">3.1.26.11</ecNumber>
    </recommendedName>
    <alternativeName>
        <fullName evidence="1">tRNA 3 endonuclease</fullName>
    </alternativeName>
    <alternativeName>
        <fullName evidence="1">tRNase Z</fullName>
    </alternativeName>
</protein>
<organism>
    <name type="scientific">Pyrobaculum neutrophilum (strain DSM 2338 / JCM 9278 / NBRC 100436 / V24Sta)</name>
    <name type="common">Thermoproteus neutrophilus</name>
    <dbReference type="NCBI Taxonomy" id="444157"/>
    <lineage>
        <taxon>Archaea</taxon>
        <taxon>Thermoproteota</taxon>
        <taxon>Thermoprotei</taxon>
        <taxon>Thermoproteales</taxon>
        <taxon>Thermoproteaceae</taxon>
        <taxon>Pyrobaculum</taxon>
    </lineage>
</organism>
<sequence>MPLLKLVFLGTGGAVPRSDRTLPAIYLEDWLGHRFLLDAGEGAQYRLLQIGVSPASLTAVAITHQHEDHTLGLPGLVITSRFLGGRTAVLAPRSMHKALEALGVEVMDSYGGDRLRVSCVEVCHTVDACGWLFQWDVGYKLDLSKAAGLPRWALTSLIRGSPVEVGGRLIKPEDVAEPGHKRLRRLLYTGDTAPCPEMWRKVGEVDVLIHEATFADDVEPQKAHEEGHSTVADAVEAAKALNAGVLILTHVSSRYPDKRRHRELAASVKPPPHVYVPEDFDTVLVRL</sequence>
<comment type="function">
    <text evidence="1">Zinc phosphodiesterase, which displays some tRNA 3'-processing endonuclease activity. Probably involved in tRNA maturation, by removing a 3'-trailer from precursor tRNA.</text>
</comment>
<comment type="catalytic activity">
    <reaction evidence="1">
        <text>Endonucleolytic cleavage of RNA, removing extra 3' nucleotides from tRNA precursor, generating 3' termini of tRNAs. A 3'-hydroxy group is left at the tRNA terminus and a 5'-phosphoryl group is left at the trailer molecule.</text>
        <dbReference type="EC" id="3.1.26.11"/>
    </reaction>
</comment>
<comment type="cofactor">
    <cofactor evidence="1">
        <name>Zn(2+)</name>
        <dbReference type="ChEBI" id="CHEBI:29105"/>
    </cofactor>
    <text evidence="1">Binds 2 Zn(2+) ions.</text>
</comment>
<comment type="subunit">
    <text evidence="1">Homodimer.</text>
</comment>
<comment type="similarity">
    <text evidence="1">Belongs to the RNase Z family.</text>
</comment>
<proteinExistence type="inferred from homology"/>
<feature type="chain" id="PRO_1000188002" description="Ribonuclease Z">
    <location>
        <begin position="1"/>
        <end position="287"/>
    </location>
</feature>
<feature type="active site" description="Proton acceptor" evidence="1">
    <location>
        <position position="68"/>
    </location>
</feature>
<feature type="binding site" evidence="1">
    <location>
        <position position="64"/>
    </location>
    <ligand>
        <name>Zn(2+)</name>
        <dbReference type="ChEBI" id="CHEBI:29105"/>
        <label>1</label>
        <note>catalytic</note>
    </ligand>
</feature>
<feature type="binding site" evidence="1">
    <location>
        <position position="66"/>
    </location>
    <ligand>
        <name>Zn(2+)</name>
        <dbReference type="ChEBI" id="CHEBI:29105"/>
        <label>1</label>
        <note>catalytic</note>
    </ligand>
</feature>
<feature type="binding site" evidence="1">
    <location>
        <position position="68"/>
    </location>
    <ligand>
        <name>Zn(2+)</name>
        <dbReference type="ChEBI" id="CHEBI:29105"/>
        <label>2</label>
        <note>catalytic</note>
    </ligand>
</feature>
<feature type="binding site" evidence="1">
    <location>
        <position position="69"/>
    </location>
    <ligand>
        <name>Zn(2+)</name>
        <dbReference type="ChEBI" id="CHEBI:29105"/>
        <label>2</label>
        <note>catalytic</note>
    </ligand>
</feature>
<feature type="binding site" evidence="1">
    <location>
        <position position="124"/>
    </location>
    <ligand>
        <name>Zn(2+)</name>
        <dbReference type="ChEBI" id="CHEBI:29105"/>
        <label>1</label>
        <note>catalytic</note>
    </ligand>
</feature>
<feature type="binding site" evidence="1">
    <location>
        <position position="191"/>
    </location>
    <ligand>
        <name>Zn(2+)</name>
        <dbReference type="ChEBI" id="CHEBI:29105"/>
        <label>1</label>
        <note>catalytic</note>
    </ligand>
</feature>
<feature type="binding site" evidence="1">
    <location>
        <position position="191"/>
    </location>
    <ligand>
        <name>Zn(2+)</name>
        <dbReference type="ChEBI" id="CHEBI:29105"/>
        <label>2</label>
        <note>catalytic</note>
    </ligand>
</feature>
<feature type="binding site" evidence="1">
    <location>
        <position position="250"/>
    </location>
    <ligand>
        <name>Zn(2+)</name>
        <dbReference type="ChEBI" id="CHEBI:29105"/>
        <label>2</label>
        <note>catalytic</note>
    </ligand>
</feature>
<gene>
    <name evidence="1" type="primary">rnz</name>
    <name type="ordered locus">Tneu_1723</name>
</gene>
<name>RNZ_PYRNV</name>
<keyword id="KW-0255">Endonuclease</keyword>
<keyword id="KW-0378">Hydrolase</keyword>
<keyword id="KW-0479">Metal-binding</keyword>
<keyword id="KW-0540">Nuclease</keyword>
<keyword id="KW-0819">tRNA processing</keyword>
<keyword id="KW-0862">Zinc</keyword>
<evidence type="ECO:0000255" key="1">
    <source>
        <dbReference type="HAMAP-Rule" id="MF_01818"/>
    </source>
</evidence>
<accession>B1YAJ2</accession>
<reference key="1">
    <citation type="submission" date="2008-03" db="EMBL/GenBank/DDBJ databases">
        <title>Complete sequence of Thermoproteus neutrophilus V24Sta.</title>
        <authorList>
            <consortium name="US DOE Joint Genome Institute"/>
            <person name="Copeland A."/>
            <person name="Lucas S."/>
            <person name="Lapidus A."/>
            <person name="Glavina del Rio T."/>
            <person name="Dalin E."/>
            <person name="Tice H."/>
            <person name="Bruce D."/>
            <person name="Goodwin L."/>
            <person name="Pitluck S."/>
            <person name="Sims D."/>
            <person name="Brettin T."/>
            <person name="Detter J.C."/>
            <person name="Han C."/>
            <person name="Kuske C.R."/>
            <person name="Schmutz J."/>
            <person name="Larimer F."/>
            <person name="Land M."/>
            <person name="Hauser L."/>
            <person name="Kyrpides N."/>
            <person name="Mikhailova N."/>
            <person name="Biddle J.F."/>
            <person name="Zhang Z."/>
            <person name="Fitz-Gibbon S.T."/>
            <person name="Lowe T.M."/>
            <person name="Saltikov C."/>
            <person name="House C.H."/>
            <person name="Richardson P."/>
        </authorList>
    </citation>
    <scope>NUCLEOTIDE SEQUENCE [LARGE SCALE GENOMIC DNA]</scope>
    <source>
        <strain>DSM 2338 / JCM 9278 / NBRC 100436 / V24Sta</strain>
    </source>
</reference>
<dbReference type="EC" id="3.1.26.11" evidence="1"/>
<dbReference type="EMBL" id="CP001014">
    <property type="protein sequence ID" value="ACB40641.1"/>
    <property type="molecule type" value="Genomic_DNA"/>
</dbReference>
<dbReference type="RefSeq" id="WP_012351060.1">
    <property type="nucleotide sequence ID" value="NC_010525.1"/>
</dbReference>
<dbReference type="SMR" id="B1YAJ2"/>
<dbReference type="STRING" id="444157.Tneu_1723"/>
<dbReference type="GeneID" id="6165416"/>
<dbReference type="KEGG" id="tne:Tneu_1723"/>
<dbReference type="eggNOG" id="arCOG00501">
    <property type="taxonomic scope" value="Archaea"/>
</dbReference>
<dbReference type="HOGENOM" id="CLU_031317_2_1_2"/>
<dbReference type="OrthoDB" id="85118at2157"/>
<dbReference type="Proteomes" id="UP000001694">
    <property type="component" value="Chromosome"/>
</dbReference>
<dbReference type="GO" id="GO:0042781">
    <property type="term" value="F:3'-tRNA processing endoribonuclease activity"/>
    <property type="evidence" value="ECO:0007669"/>
    <property type="project" value="UniProtKB-UniRule"/>
</dbReference>
<dbReference type="GO" id="GO:0008270">
    <property type="term" value="F:zinc ion binding"/>
    <property type="evidence" value="ECO:0007669"/>
    <property type="project" value="UniProtKB-UniRule"/>
</dbReference>
<dbReference type="Gene3D" id="3.60.15.10">
    <property type="entry name" value="Ribonuclease Z/Hydroxyacylglutathione hydrolase-like"/>
    <property type="match status" value="1"/>
</dbReference>
<dbReference type="HAMAP" id="MF_01818">
    <property type="entry name" value="RNase_Z_BN"/>
    <property type="match status" value="1"/>
</dbReference>
<dbReference type="InterPro" id="IPR001279">
    <property type="entry name" value="Metallo-B-lactamas"/>
</dbReference>
<dbReference type="InterPro" id="IPR036866">
    <property type="entry name" value="RibonucZ/Hydroxyglut_hydro"/>
</dbReference>
<dbReference type="InterPro" id="IPR013471">
    <property type="entry name" value="RNase_Z/BN"/>
</dbReference>
<dbReference type="PANTHER" id="PTHR46018">
    <property type="entry name" value="ZINC PHOSPHODIESTERASE ELAC PROTEIN 1"/>
    <property type="match status" value="1"/>
</dbReference>
<dbReference type="PANTHER" id="PTHR46018:SF2">
    <property type="entry name" value="ZINC PHOSPHODIESTERASE ELAC PROTEIN 1"/>
    <property type="match status" value="1"/>
</dbReference>
<dbReference type="Pfam" id="PF12706">
    <property type="entry name" value="Lactamase_B_2"/>
    <property type="match status" value="1"/>
</dbReference>
<dbReference type="SUPFAM" id="SSF56281">
    <property type="entry name" value="Metallo-hydrolase/oxidoreductase"/>
    <property type="match status" value="1"/>
</dbReference>